<evidence type="ECO:0000255" key="1">
    <source>
        <dbReference type="PROSITE-ProRule" id="PRU01128"/>
    </source>
</evidence>
<evidence type="ECO:0000256" key="2">
    <source>
        <dbReference type="SAM" id="MobiDB-lite"/>
    </source>
</evidence>
<evidence type="ECO:0000305" key="3"/>
<name>YPL1_CAEEL</name>
<gene>
    <name type="ORF">F37A8.5</name>
</gene>
<organism>
    <name type="scientific">Caenorhabditis elegans</name>
    <dbReference type="NCBI Taxonomy" id="6239"/>
    <lineage>
        <taxon>Eukaryota</taxon>
        <taxon>Metazoa</taxon>
        <taxon>Ecdysozoa</taxon>
        <taxon>Nematoda</taxon>
        <taxon>Chromadorea</taxon>
        <taxon>Rhabditida</taxon>
        <taxon>Rhabditina</taxon>
        <taxon>Rhabditomorpha</taxon>
        <taxon>Rhabditoidea</taxon>
        <taxon>Rhabditidae</taxon>
        <taxon>Peloderinae</taxon>
        <taxon>Caenorhabditis</taxon>
    </lineage>
</organism>
<reference key="1">
    <citation type="journal article" date="1998" name="Science">
        <title>Genome sequence of the nematode C. elegans: a platform for investigating biology.</title>
        <authorList>
            <consortium name="The C. elegans sequencing consortium"/>
        </authorList>
    </citation>
    <scope>NUCLEOTIDE SEQUENCE [LARGE SCALE GENOMIC DNA]</scope>
    <source>
        <strain>Bristol N2</strain>
    </source>
</reference>
<feature type="chain" id="PRO_0000212399" description="Protein yippee-like F37A8.5">
    <location>
        <begin position="1"/>
        <end position="137"/>
    </location>
</feature>
<feature type="domain" description="Yippee" evidence="1">
    <location>
        <begin position="32"/>
        <end position="129"/>
    </location>
</feature>
<feature type="region of interest" description="Disordered" evidence="2">
    <location>
        <begin position="1"/>
        <end position="20"/>
    </location>
</feature>
<feature type="binding site" evidence="1">
    <location>
        <position position="36"/>
    </location>
    <ligand>
        <name>Zn(2+)</name>
        <dbReference type="ChEBI" id="CHEBI:29105"/>
    </ligand>
</feature>
<feature type="binding site" evidence="1">
    <location>
        <position position="39"/>
    </location>
    <ligand>
        <name>Zn(2+)</name>
        <dbReference type="ChEBI" id="CHEBI:29105"/>
    </ligand>
</feature>
<feature type="binding site" evidence="1">
    <location>
        <position position="92"/>
    </location>
    <ligand>
        <name>Zn(2+)</name>
        <dbReference type="ChEBI" id="CHEBI:29105"/>
    </ligand>
</feature>
<feature type="binding site" evidence="1">
    <location>
        <position position="95"/>
    </location>
    <ligand>
        <name>Zn(2+)</name>
        <dbReference type="ChEBI" id="CHEBI:29105"/>
    </ligand>
</feature>
<proteinExistence type="inferred from homology"/>
<sequence length="137" mass="15539">MHFRMKVLENSSKHNTPKKQKTFQHYLPAGDRCYSCIHCRANLAAHAELISKSFQGSQGKAYLFNAVVNVGCGPAEERVLLTGLHAVADIYCEICKTTLGWKYEHAFESSQKYKEGKFIIELAHMVKDNGWDEQNDS</sequence>
<dbReference type="EMBL" id="Z35600">
    <property type="protein sequence ID" value="CAB54236.1"/>
    <property type="molecule type" value="Genomic_DNA"/>
</dbReference>
<dbReference type="PIR" id="T21895">
    <property type="entry name" value="T21895"/>
</dbReference>
<dbReference type="RefSeq" id="NP_497796.1">
    <property type="nucleotide sequence ID" value="NM_065395.2"/>
</dbReference>
<dbReference type="SMR" id="Q9U3G6"/>
<dbReference type="FunCoup" id="Q9U3G6">
    <property type="interactions" value="1627"/>
</dbReference>
<dbReference type="STRING" id="6239.F37A8.5.1"/>
<dbReference type="PaxDb" id="6239-F37A8.5"/>
<dbReference type="EnsemblMetazoa" id="F37A8.5.1">
    <property type="protein sequence ID" value="F37A8.5.1"/>
    <property type="gene ID" value="WBGene00009503"/>
</dbReference>
<dbReference type="GeneID" id="175512"/>
<dbReference type="KEGG" id="cel:CELE_F37A8.5"/>
<dbReference type="UCSC" id="F37A8.5">
    <property type="organism name" value="c. elegans"/>
</dbReference>
<dbReference type="AGR" id="WB:WBGene00009503"/>
<dbReference type="CTD" id="175512"/>
<dbReference type="WormBase" id="F37A8.5">
    <property type="protein sequence ID" value="CE23704"/>
    <property type="gene ID" value="WBGene00009503"/>
</dbReference>
<dbReference type="eggNOG" id="KOG3399">
    <property type="taxonomic scope" value="Eukaryota"/>
</dbReference>
<dbReference type="GeneTree" id="ENSGT00940000164942"/>
<dbReference type="HOGENOM" id="CLU_043857_5_2_1"/>
<dbReference type="InParanoid" id="Q9U3G6"/>
<dbReference type="OMA" id="SSRIYGC"/>
<dbReference type="OrthoDB" id="6407410at2759"/>
<dbReference type="PhylomeDB" id="Q9U3G6"/>
<dbReference type="PRO" id="PR:Q9U3G6"/>
<dbReference type="Proteomes" id="UP000001940">
    <property type="component" value="Chromosome III"/>
</dbReference>
<dbReference type="Bgee" id="WBGene00009503">
    <property type="expression patterns" value="Expressed in pharyngeal muscle cell (C elegans) and 3 other cell types or tissues"/>
</dbReference>
<dbReference type="GO" id="GO:0046872">
    <property type="term" value="F:metal ion binding"/>
    <property type="evidence" value="ECO:0007669"/>
    <property type="project" value="UniProtKB-KW"/>
</dbReference>
<dbReference type="InterPro" id="IPR034751">
    <property type="entry name" value="Yippee"/>
</dbReference>
<dbReference type="InterPro" id="IPR004910">
    <property type="entry name" value="Yippee/Mis18/Cereblon"/>
</dbReference>
<dbReference type="InterPro" id="IPR039058">
    <property type="entry name" value="Yippee_fam"/>
</dbReference>
<dbReference type="PANTHER" id="PTHR13848">
    <property type="entry name" value="PROTEIN YIPPEE-LIKE CG15309-RELATED"/>
    <property type="match status" value="1"/>
</dbReference>
<dbReference type="Pfam" id="PF03226">
    <property type="entry name" value="Yippee-Mis18"/>
    <property type="match status" value="1"/>
</dbReference>
<dbReference type="PROSITE" id="PS51792">
    <property type="entry name" value="YIPPEE"/>
    <property type="match status" value="1"/>
</dbReference>
<protein>
    <recommendedName>
        <fullName>Protein yippee-like F37A8.5</fullName>
    </recommendedName>
</protein>
<comment type="similarity">
    <text evidence="3">Belongs to the yippee family.</text>
</comment>
<keyword id="KW-0479">Metal-binding</keyword>
<keyword id="KW-1185">Reference proteome</keyword>
<keyword id="KW-0862">Zinc</keyword>
<accession>Q9U3G6</accession>